<protein>
    <recommendedName>
        <fullName evidence="1">ATP-dependent Clp protease ATP-binding subunit ClpX</fullName>
    </recommendedName>
</protein>
<name>CLPX_SACD2</name>
<sequence length="431" mass="47322">MSDHTGDNEDNGKLLYCSFCGKSQHEVRKLIAGPSVFICDECVDLCNDIIREEIQESTTESTGDKLPTPQEISETLDEYVIGQKQAKKVLAVAVYNHYKRLRVGDKKKSKDDVELGKSNILLVGPTGSGKTLLAETLARLLNVPFTIADATTLTEAGYVGEDVENIIQKLLQKCDYDVEKAQQGIVYIDEIDKISRKSDNPSITRDVSGEGVQQALLKLIEGTVASVPPQGGRKHPQQEFLQVDTGNILFICGGAFAGLDKVIRDRSEKGGIGFSAEVKSKDSGKNVGETLRELEPEDLVRYGLIPEFVGRLPVIATLDELDQDALVRILKEPKNSLVKQYSKLFEMEGSEVDFRDDALEAVANKAMERKTGARGLRSIMENVLLDTMYKIPSEENVVKVVVDESVIKGESAPLLVYGNNDAETAKAVPEE</sequence>
<gene>
    <name evidence="1" type="primary">clpX</name>
    <name type="ordered locus">Sde_1609</name>
</gene>
<proteinExistence type="inferred from homology"/>
<evidence type="ECO:0000255" key="1">
    <source>
        <dbReference type="HAMAP-Rule" id="MF_00175"/>
    </source>
</evidence>
<evidence type="ECO:0000255" key="2">
    <source>
        <dbReference type="PROSITE-ProRule" id="PRU01250"/>
    </source>
</evidence>
<keyword id="KW-0067">ATP-binding</keyword>
<keyword id="KW-0143">Chaperone</keyword>
<keyword id="KW-0479">Metal-binding</keyword>
<keyword id="KW-0547">Nucleotide-binding</keyword>
<keyword id="KW-1185">Reference proteome</keyword>
<keyword id="KW-0862">Zinc</keyword>
<organism>
    <name type="scientific">Saccharophagus degradans (strain 2-40 / ATCC 43961 / DSM 17024)</name>
    <dbReference type="NCBI Taxonomy" id="203122"/>
    <lineage>
        <taxon>Bacteria</taxon>
        <taxon>Pseudomonadati</taxon>
        <taxon>Pseudomonadota</taxon>
        <taxon>Gammaproteobacteria</taxon>
        <taxon>Cellvibrionales</taxon>
        <taxon>Cellvibrionaceae</taxon>
        <taxon>Saccharophagus</taxon>
    </lineage>
</organism>
<accession>Q21KA8</accession>
<dbReference type="EMBL" id="CP000282">
    <property type="protein sequence ID" value="ABD80871.1"/>
    <property type="molecule type" value="Genomic_DNA"/>
</dbReference>
<dbReference type="RefSeq" id="WP_011468091.1">
    <property type="nucleotide sequence ID" value="NC_007912.1"/>
</dbReference>
<dbReference type="SMR" id="Q21KA8"/>
<dbReference type="STRING" id="203122.Sde_1609"/>
<dbReference type="GeneID" id="98613287"/>
<dbReference type="KEGG" id="sde:Sde_1609"/>
<dbReference type="eggNOG" id="COG1219">
    <property type="taxonomic scope" value="Bacteria"/>
</dbReference>
<dbReference type="HOGENOM" id="CLU_014218_8_2_6"/>
<dbReference type="OrthoDB" id="9804062at2"/>
<dbReference type="Proteomes" id="UP000001947">
    <property type="component" value="Chromosome"/>
</dbReference>
<dbReference type="GO" id="GO:0009376">
    <property type="term" value="C:HslUV protease complex"/>
    <property type="evidence" value="ECO:0007669"/>
    <property type="project" value="TreeGrafter"/>
</dbReference>
<dbReference type="GO" id="GO:0005524">
    <property type="term" value="F:ATP binding"/>
    <property type="evidence" value="ECO:0007669"/>
    <property type="project" value="UniProtKB-UniRule"/>
</dbReference>
<dbReference type="GO" id="GO:0016887">
    <property type="term" value="F:ATP hydrolysis activity"/>
    <property type="evidence" value="ECO:0007669"/>
    <property type="project" value="InterPro"/>
</dbReference>
<dbReference type="GO" id="GO:0140662">
    <property type="term" value="F:ATP-dependent protein folding chaperone"/>
    <property type="evidence" value="ECO:0007669"/>
    <property type="project" value="InterPro"/>
</dbReference>
<dbReference type="GO" id="GO:0046983">
    <property type="term" value="F:protein dimerization activity"/>
    <property type="evidence" value="ECO:0007669"/>
    <property type="project" value="InterPro"/>
</dbReference>
<dbReference type="GO" id="GO:0051082">
    <property type="term" value="F:unfolded protein binding"/>
    <property type="evidence" value="ECO:0007669"/>
    <property type="project" value="UniProtKB-UniRule"/>
</dbReference>
<dbReference type="GO" id="GO:0008270">
    <property type="term" value="F:zinc ion binding"/>
    <property type="evidence" value="ECO:0007669"/>
    <property type="project" value="InterPro"/>
</dbReference>
<dbReference type="GO" id="GO:0051301">
    <property type="term" value="P:cell division"/>
    <property type="evidence" value="ECO:0007669"/>
    <property type="project" value="TreeGrafter"/>
</dbReference>
<dbReference type="GO" id="GO:0051603">
    <property type="term" value="P:proteolysis involved in protein catabolic process"/>
    <property type="evidence" value="ECO:0007669"/>
    <property type="project" value="TreeGrafter"/>
</dbReference>
<dbReference type="CDD" id="cd19497">
    <property type="entry name" value="RecA-like_ClpX"/>
    <property type="match status" value="1"/>
</dbReference>
<dbReference type="FunFam" id="1.10.8.60:FF:000002">
    <property type="entry name" value="ATP-dependent Clp protease ATP-binding subunit ClpX"/>
    <property type="match status" value="1"/>
</dbReference>
<dbReference type="FunFam" id="3.40.50.300:FF:000005">
    <property type="entry name" value="ATP-dependent Clp protease ATP-binding subunit ClpX"/>
    <property type="match status" value="1"/>
</dbReference>
<dbReference type="Gene3D" id="1.10.8.60">
    <property type="match status" value="1"/>
</dbReference>
<dbReference type="Gene3D" id="6.20.220.10">
    <property type="entry name" value="ClpX chaperone, C4-type zinc finger domain"/>
    <property type="match status" value="1"/>
</dbReference>
<dbReference type="Gene3D" id="3.40.50.300">
    <property type="entry name" value="P-loop containing nucleotide triphosphate hydrolases"/>
    <property type="match status" value="1"/>
</dbReference>
<dbReference type="HAMAP" id="MF_00175">
    <property type="entry name" value="ClpX"/>
    <property type="match status" value="1"/>
</dbReference>
<dbReference type="InterPro" id="IPR003593">
    <property type="entry name" value="AAA+_ATPase"/>
</dbReference>
<dbReference type="InterPro" id="IPR050052">
    <property type="entry name" value="ATP-dep_Clp_protease_ClpX"/>
</dbReference>
<dbReference type="InterPro" id="IPR003959">
    <property type="entry name" value="ATPase_AAA_core"/>
</dbReference>
<dbReference type="InterPro" id="IPR019489">
    <property type="entry name" value="Clp_ATPase_C"/>
</dbReference>
<dbReference type="InterPro" id="IPR004487">
    <property type="entry name" value="Clp_protease_ATP-bd_su_ClpX"/>
</dbReference>
<dbReference type="InterPro" id="IPR046425">
    <property type="entry name" value="ClpX_bact"/>
</dbReference>
<dbReference type="InterPro" id="IPR027417">
    <property type="entry name" value="P-loop_NTPase"/>
</dbReference>
<dbReference type="InterPro" id="IPR010603">
    <property type="entry name" value="Znf_CppX_C4"/>
</dbReference>
<dbReference type="InterPro" id="IPR038366">
    <property type="entry name" value="Znf_CppX_C4_sf"/>
</dbReference>
<dbReference type="NCBIfam" id="TIGR00382">
    <property type="entry name" value="clpX"/>
    <property type="match status" value="1"/>
</dbReference>
<dbReference type="NCBIfam" id="NF003745">
    <property type="entry name" value="PRK05342.1"/>
    <property type="match status" value="1"/>
</dbReference>
<dbReference type="PANTHER" id="PTHR48102:SF7">
    <property type="entry name" value="ATP-DEPENDENT CLP PROTEASE ATP-BINDING SUBUNIT CLPX-LIKE, MITOCHONDRIAL"/>
    <property type="match status" value="1"/>
</dbReference>
<dbReference type="PANTHER" id="PTHR48102">
    <property type="entry name" value="ATP-DEPENDENT CLP PROTEASE ATP-BINDING SUBUNIT CLPX-LIKE, MITOCHONDRIAL-RELATED"/>
    <property type="match status" value="1"/>
</dbReference>
<dbReference type="Pfam" id="PF07724">
    <property type="entry name" value="AAA_2"/>
    <property type="match status" value="1"/>
</dbReference>
<dbReference type="Pfam" id="PF10431">
    <property type="entry name" value="ClpB_D2-small"/>
    <property type="match status" value="1"/>
</dbReference>
<dbReference type="Pfam" id="PF06689">
    <property type="entry name" value="zf-C4_ClpX"/>
    <property type="match status" value="1"/>
</dbReference>
<dbReference type="SMART" id="SM00382">
    <property type="entry name" value="AAA"/>
    <property type="match status" value="1"/>
</dbReference>
<dbReference type="SMART" id="SM01086">
    <property type="entry name" value="ClpB_D2-small"/>
    <property type="match status" value="1"/>
</dbReference>
<dbReference type="SMART" id="SM00994">
    <property type="entry name" value="zf-C4_ClpX"/>
    <property type="match status" value="1"/>
</dbReference>
<dbReference type="SUPFAM" id="SSF57716">
    <property type="entry name" value="Glucocorticoid receptor-like (DNA-binding domain)"/>
    <property type="match status" value="1"/>
</dbReference>
<dbReference type="SUPFAM" id="SSF52540">
    <property type="entry name" value="P-loop containing nucleoside triphosphate hydrolases"/>
    <property type="match status" value="1"/>
</dbReference>
<dbReference type="PROSITE" id="PS51902">
    <property type="entry name" value="CLPX_ZB"/>
    <property type="match status" value="1"/>
</dbReference>
<comment type="function">
    <text evidence="1">ATP-dependent specificity component of the Clp protease. It directs the protease to specific substrates. Can perform chaperone functions in the absence of ClpP.</text>
</comment>
<comment type="subunit">
    <text evidence="1">Component of the ClpX-ClpP complex. Forms a hexameric ring that, in the presence of ATP, binds to fourteen ClpP subunits assembled into a disk-like structure with a central cavity, resembling the structure of eukaryotic proteasomes.</text>
</comment>
<comment type="similarity">
    <text evidence="1">Belongs to the ClpX chaperone family.</text>
</comment>
<feature type="chain" id="PRO_1000097992" description="ATP-dependent Clp protease ATP-binding subunit ClpX">
    <location>
        <begin position="1"/>
        <end position="431"/>
    </location>
</feature>
<feature type="domain" description="ClpX-type ZB" evidence="2">
    <location>
        <begin position="5"/>
        <end position="58"/>
    </location>
</feature>
<feature type="binding site" evidence="2">
    <location>
        <position position="17"/>
    </location>
    <ligand>
        <name>Zn(2+)</name>
        <dbReference type="ChEBI" id="CHEBI:29105"/>
    </ligand>
</feature>
<feature type="binding site" evidence="2">
    <location>
        <position position="20"/>
    </location>
    <ligand>
        <name>Zn(2+)</name>
        <dbReference type="ChEBI" id="CHEBI:29105"/>
    </ligand>
</feature>
<feature type="binding site" evidence="2">
    <location>
        <position position="39"/>
    </location>
    <ligand>
        <name>Zn(2+)</name>
        <dbReference type="ChEBI" id="CHEBI:29105"/>
    </ligand>
</feature>
<feature type="binding site" evidence="2">
    <location>
        <position position="42"/>
    </location>
    <ligand>
        <name>Zn(2+)</name>
        <dbReference type="ChEBI" id="CHEBI:29105"/>
    </ligand>
</feature>
<feature type="binding site" evidence="1">
    <location>
        <begin position="125"/>
        <end position="132"/>
    </location>
    <ligand>
        <name>ATP</name>
        <dbReference type="ChEBI" id="CHEBI:30616"/>
    </ligand>
</feature>
<reference key="1">
    <citation type="journal article" date="2008" name="PLoS Genet.">
        <title>Complete genome sequence of the complex carbohydrate-degrading marine bacterium, Saccharophagus degradans strain 2-40 T.</title>
        <authorList>
            <person name="Weiner R.M."/>
            <person name="Taylor L.E. II"/>
            <person name="Henrissat B."/>
            <person name="Hauser L."/>
            <person name="Land M."/>
            <person name="Coutinho P.M."/>
            <person name="Rancurel C."/>
            <person name="Saunders E.H."/>
            <person name="Longmire A.G."/>
            <person name="Zhang H."/>
            <person name="Bayer E.A."/>
            <person name="Gilbert H.J."/>
            <person name="Larimer F."/>
            <person name="Zhulin I.B."/>
            <person name="Ekborg N.A."/>
            <person name="Lamed R."/>
            <person name="Richardson P.M."/>
            <person name="Borovok I."/>
            <person name="Hutcheson S."/>
        </authorList>
    </citation>
    <scope>NUCLEOTIDE SEQUENCE [LARGE SCALE GENOMIC DNA]</scope>
    <source>
        <strain>2-40 / ATCC 43961 / DSM 17024</strain>
    </source>
</reference>